<sequence>MKTLYSLRRFYPVETLFNGTLAVAGRDQETTGFAWWAGNARLINLSGKLLGAHVAHAGLIVFWAGAMNLFEVAHFVPEKPMYEQGLILLPHLATLGWGVGPGGEVIDTFPYFVSGVLHLISSAVLGFGGIYHALLGPETLEESFPFFGYVWKDRNKMTTILGIHLILLGIGAFLLVFKALYFGGVYDTWAPGGGEMLRKITNLTLSPSVIFGYLLKSFFGGEGWIVSVDDLEDIIGGHVWLGSICIFGGIWHILTKPFAWARRALVWSGEAYLSYSLGALAVFGFIACCFVWFNNTAYPSEFYGPTGPEASQAQAFTFLVRDQRLGANVGSAQGPTGLGKYLMRSPTGEVIFGGETMRFWDLRAPWLEPLRGPNGLDLSRLKKDIQPWQERRSAEYMTHAPLGSLNSVGGVATEINAVNYVSPRTWLSTSHFVLGFFFFVGHLWHAGRARAAAAGFEKGIDRDFEPVLSMTPIN</sequence>
<reference key="1">
    <citation type="journal article" date="2006" name="BMC Plant Biol.">
        <title>The complete chloroplast genome sequence of Citrus sinensis (L.) Osbeck var 'Ridge Pineapple': organization and phylogenetic relationships to other angiosperms.</title>
        <authorList>
            <person name="Bausher M.G."/>
            <person name="Singh N.D."/>
            <person name="Lee S.-B."/>
            <person name="Jansen R.K."/>
            <person name="Daniell H."/>
        </authorList>
    </citation>
    <scope>NUCLEOTIDE SEQUENCE [LARGE SCALE GENOMIC DNA]</scope>
    <source>
        <strain>cv. Osbeck var. Ridge Pineapple</strain>
    </source>
</reference>
<name>PSBC_CITSI</name>
<protein>
    <recommendedName>
        <fullName evidence="1">Photosystem II CP43 reaction center protein</fullName>
    </recommendedName>
    <alternativeName>
        <fullName evidence="1">PSII 43 kDa protein</fullName>
    </alternativeName>
    <alternativeName>
        <fullName evidence="1">Protein CP-43</fullName>
    </alternativeName>
</protein>
<comment type="function">
    <text evidence="1">One of the components of the core complex of photosystem II (PSII). It binds chlorophyll and helps catalyze the primary light-induced photochemical processes of PSII. PSII is a light-driven water:plastoquinone oxidoreductase, using light energy to abstract electrons from H(2)O, generating O(2) and a proton gradient subsequently used for ATP formation.</text>
</comment>
<comment type="cofactor">
    <text evidence="1">Binds multiple chlorophylls and provides some of the ligands for the Ca-4Mn-5O cluster of the oxygen-evolving complex. It may also provide a ligand for a Cl- that is required for oxygen evolution. PSII binds additional chlorophylls, carotenoids and specific lipids.</text>
</comment>
<comment type="subunit">
    <text evidence="1">PSII is composed of 1 copy each of membrane proteins PsbA, PsbB, PsbC, PsbD, PsbE, PsbF, PsbH, PsbI, PsbJ, PsbK, PsbL, PsbM, PsbT, PsbX, PsbY, PsbZ, Psb30/Ycf12, at least 3 peripheral proteins of the oxygen-evolving complex and a large number of cofactors. It forms dimeric complexes.</text>
</comment>
<comment type="subcellular location">
    <subcellularLocation>
        <location evidence="1">Plastid</location>
        <location evidence="1">Chloroplast thylakoid membrane</location>
        <topology evidence="1">Multi-pass membrane protein</topology>
    </subcellularLocation>
</comment>
<comment type="similarity">
    <text evidence="1">Belongs to the PsbB/PsbC family. PsbC subfamily.</text>
</comment>
<dbReference type="EMBL" id="DQ864733">
    <property type="protein sequence ID" value="ABI49016.1"/>
    <property type="molecule type" value="Genomic_DNA"/>
</dbReference>
<dbReference type="RefSeq" id="YP_740471.2">
    <property type="nucleotide sequence ID" value="NC_008334.1"/>
</dbReference>
<dbReference type="SMR" id="Q09MI2"/>
<dbReference type="PaxDb" id="2711-XP_006471301.1"/>
<dbReference type="GeneID" id="4271201"/>
<dbReference type="KEGG" id="cit:4271201"/>
<dbReference type="eggNOG" id="ENOG502QR3X">
    <property type="taxonomic scope" value="Eukaryota"/>
</dbReference>
<dbReference type="OrthoDB" id="898666at71240"/>
<dbReference type="GO" id="GO:0009535">
    <property type="term" value="C:chloroplast thylakoid membrane"/>
    <property type="evidence" value="ECO:0007669"/>
    <property type="project" value="UniProtKB-SubCell"/>
</dbReference>
<dbReference type="GO" id="GO:0009523">
    <property type="term" value="C:photosystem II"/>
    <property type="evidence" value="ECO:0007669"/>
    <property type="project" value="UniProtKB-KW"/>
</dbReference>
<dbReference type="GO" id="GO:0016168">
    <property type="term" value="F:chlorophyll binding"/>
    <property type="evidence" value="ECO:0007669"/>
    <property type="project" value="UniProtKB-UniRule"/>
</dbReference>
<dbReference type="GO" id="GO:0045156">
    <property type="term" value="F:electron transporter, transferring electrons within the cyclic electron transport pathway of photosynthesis activity"/>
    <property type="evidence" value="ECO:0007669"/>
    <property type="project" value="InterPro"/>
</dbReference>
<dbReference type="GO" id="GO:0046872">
    <property type="term" value="F:metal ion binding"/>
    <property type="evidence" value="ECO:0007669"/>
    <property type="project" value="UniProtKB-KW"/>
</dbReference>
<dbReference type="GO" id="GO:0009772">
    <property type="term" value="P:photosynthetic electron transport in photosystem II"/>
    <property type="evidence" value="ECO:0007669"/>
    <property type="project" value="InterPro"/>
</dbReference>
<dbReference type="FunFam" id="1.10.10.670:FF:000001">
    <property type="entry name" value="Photosystem II CP43 reaction center protein"/>
    <property type="match status" value="1"/>
</dbReference>
<dbReference type="Gene3D" id="1.10.10.670">
    <property type="entry name" value="photosystem ii from thermosynechococcus elongatus"/>
    <property type="match status" value="1"/>
</dbReference>
<dbReference type="HAMAP" id="MF_01496">
    <property type="entry name" value="PSII_PsbC_CP43"/>
    <property type="match status" value="1"/>
</dbReference>
<dbReference type="InterPro" id="IPR000932">
    <property type="entry name" value="PS_antenna-like"/>
</dbReference>
<dbReference type="InterPro" id="IPR036001">
    <property type="entry name" value="PS_II_antenna-like_sf"/>
</dbReference>
<dbReference type="InterPro" id="IPR005869">
    <property type="entry name" value="PSII_PsbC"/>
</dbReference>
<dbReference type="InterPro" id="IPR044900">
    <property type="entry name" value="PSII_PsbC_sf"/>
</dbReference>
<dbReference type="NCBIfam" id="TIGR01153">
    <property type="entry name" value="psbC"/>
    <property type="match status" value="1"/>
</dbReference>
<dbReference type="Pfam" id="PF00421">
    <property type="entry name" value="PSII"/>
    <property type="match status" value="1"/>
</dbReference>
<dbReference type="SUPFAM" id="SSF161077">
    <property type="entry name" value="Photosystem II antenna protein-like"/>
    <property type="match status" value="1"/>
</dbReference>
<organism>
    <name type="scientific">Citrus sinensis</name>
    <name type="common">Sweet orange</name>
    <name type="synonym">Citrus aurantium var. sinensis</name>
    <dbReference type="NCBI Taxonomy" id="2711"/>
    <lineage>
        <taxon>Eukaryota</taxon>
        <taxon>Viridiplantae</taxon>
        <taxon>Streptophyta</taxon>
        <taxon>Embryophyta</taxon>
        <taxon>Tracheophyta</taxon>
        <taxon>Spermatophyta</taxon>
        <taxon>Magnoliopsida</taxon>
        <taxon>eudicotyledons</taxon>
        <taxon>Gunneridae</taxon>
        <taxon>Pentapetalae</taxon>
        <taxon>rosids</taxon>
        <taxon>malvids</taxon>
        <taxon>Sapindales</taxon>
        <taxon>Rutaceae</taxon>
        <taxon>Aurantioideae</taxon>
        <taxon>Citrus</taxon>
    </lineage>
</organism>
<gene>
    <name evidence="1" type="primary">psbC</name>
</gene>
<geneLocation type="chloroplast"/>
<keyword id="KW-0007">Acetylation</keyword>
<keyword id="KW-0148">Chlorophyll</keyword>
<keyword id="KW-0150">Chloroplast</keyword>
<keyword id="KW-0157">Chromophore</keyword>
<keyword id="KW-0464">Manganese</keyword>
<keyword id="KW-0472">Membrane</keyword>
<keyword id="KW-0479">Metal-binding</keyword>
<keyword id="KW-0597">Phosphoprotein</keyword>
<keyword id="KW-0602">Photosynthesis</keyword>
<keyword id="KW-0604">Photosystem II</keyword>
<keyword id="KW-0934">Plastid</keyword>
<keyword id="KW-0793">Thylakoid</keyword>
<keyword id="KW-0812">Transmembrane</keyword>
<keyword id="KW-1133">Transmembrane helix</keyword>
<evidence type="ECO:0000255" key="1">
    <source>
        <dbReference type="HAMAP-Rule" id="MF_01496"/>
    </source>
</evidence>
<proteinExistence type="inferred from homology"/>
<feature type="propeptide" id="PRO_0000431129" evidence="1">
    <location>
        <begin position="1"/>
        <end position="14"/>
    </location>
</feature>
<feature type="chain" id="PRO_0000361352" description="Photosystem II CP43 reaction center protein" evidence="1">
    <location>
        <begin position="15"/>
        <end position="474"/>
    </location>
</feature>
<feature type="transmembrane region" description="Helical" evidence="1">
    <location>
        <begin position="69"/>
        <end position="93"/>
    </location>
</feature>
<feature type="transmembrane region" description="Helical" evidence="1">
    <location>
        <begin position="134"/>
        <end position="155"/>
    </location>
</feature>
<feature type="transmembrane region" description="Helical" evidence="1">
    <location>
        <begin position="178"/>
        <end position="201"/>
    </location>
</feature>
<feature type="transmembrane region" description="Helical" evidence="1">
    <location>
        <begin position="256"/>
        <end position="276"/>
    </location>
</feature>
<feature type="transmembrane region" description="Helical" evidence="1">
    <location>
        <begin position="292"/>
        <end position="313"/>
    </location>
</feature>
<feature type="transmembrane region" description="Helical" evidence="1">
    <location>
        <begin position="448"/>
        <end position="472"/>
    </location>
</feature>
<feature type="binding site" evidence="1">
    <location>
        <position position="368"/>
    </location>
    <ligand>
        <name>[CaMn4O5] cluster</name>
        <dbReference type="ChEBI" id="CHEBI:189552"/>
    </ligand>
</feature>
<feature type="modified residue" description="N-acetylthreonine" evidence="1">
    <location>
        <position position="15"/>
    </location>
</feature>
<feature type="modified residue" description="Phosphothreonine" evidence="1">
    <location>
        <position position="15"/>
    </location>
</feature>
<accession>Q09MI2</accession>